<organism>
    <name type="scientific">Ralstonia pickettii (strain 12J)</name>
    <dbReference type="NCBI Taxonomy" id="402626"/>
    <lineage>
        <taxon>Bacteria</taxon>
        <taxon>Pseudomonadati</taxon>
        <taxon>Pseudomonadota</taxon>
        <taxon>Betaproteobacteria</taxon>
        <taxon>Burkholderiales</taxon>
        <taxon>Burkholderiaceae</taxon>
        <taxon>Ralstonia</taxon>
    </lineage>
</organism>
<gene>
    <name type="ordered locus">Rpic_2712</name>
</gene>
<dbReference type="EMBL" id="CP001068">
    <property type="protein sequence ID" value="ACD27837.1"/>
    <property type="molecule type" value="Genomic_DNA"/>
</dbReference>
<dbReference type="SMR" id="B2UAP0"/>
<dbReference type="STRING" id="402626.Rpic_2712"/>
<dbReference type="KEGG" id="rpi:Rpic_2712"/>
<dbReference type="eggNOG" id="COG2003">
    <property type="taxonomic scope" value="Bacteria"/>
</dbReference>
<dbReference type="HOGENOM" id="CLU_073529_0_1_4"/>
<dbReference type="GO" id="GO:0046872">
    <property type="term" value="F:metal ion binding"/>
    <property type="evidence" value="ECO:0007669"/>
    <property type="project" value="UniProtKB-KW"/>
</dbReference>
<dbReference type="GO" id="GO:0008237">
    <property type="term" value="F:metallopeptidase activity"/>
    <property type="evidence" value="ECO:0007669"/>
    <property type="project" value="UniProtKB-KW"/>
</dbReference>
<dbReference type="GO" id="GO:0006508">
    <property type="term" value="P:proteolysis"/>
    <property type="evidence" value="ECO:0007669"/>
    <property type="project" value="UniProtKB-KW"/>
</dbReference>
<dbReference type="CDD" id="cd08071">
    <property type="entry name" value="MPN_DUF2466"/>
    <property type="match status" value="1"/>
</dbReference>
<dbReference type="Gene3D" id="1.10.150.20">
    <property type="entry name" value="5' to 3' exonuclease, C-terminal subdomain"/>
    <property type="match status" value="1"/>
</dbReference>
<dbReference type="Gene3D" id="3.40.140.10">
    <property type="entry name" value="Cytidine Deaminase, domain 2"/>
    <property type="match status" value="1"/>
</dbReference>
<dbReference type="InterPro" id="IPR037518">
    <property type="entry name" value="MPN"/>
</dbReference>
<dbReference type="InterPro" id="IPR025657">
    <property type="entry name" value="RadC_JAB"/>
</dbReference>
<dbReference type="InterPro" id="IPR010994">
    <property type="entry name" value="RuvA_2-like"/>
</dbReference>
<dbReference type="InterPro" id="IPR001405">
    <property type="entry name" value="UPF0758"/>
</dbReference>
<dbReference type="InterPro" id="IPR046778">
    <property type="entry name" value="UPF0758_N"/>
</dbReference>
<dbReference type="NCBIfam" id="NF000642">
    <property type="entry name" value="PRK00024.1"/>
    <property type="match status" value="1"/>
</dbReference>
<dbReference type="NCBIfam" id="TIGR00608">
    <property type="entry name" value="radc"/>
    <property type="match status" value="1"/>
</dbReference>
<dbReference type="PANTHER" id="PTHR30471">
    <property type="entry name" value="DNA REPAIR PROTEIN RADC"/>
    <property type="match status" value="1"/>
</dbReference>
<dbReference type="PANTHER" id="PTHR30471:SF3">
    <property type="entry name" value="UPF0758 PROTEIN YEES-RELATED"/>
    <property type="match status" value="1"/>
</dbReference>
<dbReference type="Pfam" id="PF04002">
    <property type="entry name" value="RadC"/>
    <property type="match status" value="1"/>
</dbReference>
<dbReference type="Pfam" id="PF20582">
    <property type="entry name" value="UPF0758_N"/>
    <property type="match status" value="1"/>
</dbReference>
<dbReference type="SUPFAM" id="SSF47781">
    <property type="entry name" value="RuvA domain 2-like"/>
    <property type="match status" value="1"/>
</dbReference>
<dbReference type="PROSITE" id="PS50249">
    <property type="entry name" value="MPN"/>
    <property type="match status" value="1"/>
</dbReference>
<reference key="1">
    <citation type="submission" date="2008-05" db="EMBL/GenBank/DDBJ databases">
        <title>Complete sequence of chromosome 1 of Ralstonia pickettii 12J.</title>
        <authorList>
            <person name="Lucas S."/>
            <person name="Copeland A."/>
            <person name="Lapidus A."/>
            <person name="Glavina del Rio T."/>
            <person name="Dalin E."/>
            <person name="Tice H."/>
            <person name="Bruce D."/>
            <person name="Goodwin L."/>
            <person name="Pitluck S."/>
            <person name="Meincke L."/>
            <person name="Brettin T."/>
            <person name="Detter J.C."/>
            <person name="Han C."/>
            <person name="Kuske C.R."/>
            <person name="Schmutz J."/>
            <person name="Larimer F."/>
            <person name="Land M."/>
            <person name="Hauser L."/>
            <person name="Kyrpides N."/>
            <person name="Mikhailova N."/>
            <person name="Marsh T."/>
            <person name="Richardson P."/>
        </authorList>
    </citation>
    <scope>NUCLEOTIDE SEQUENCE [LARGE SCALE GENOMIC DNA]</scope>
    <source>
        <strain>12J</strain>
    </source>
</reference>
<accession>B2UAP0</accession>
<name>Y2712_RALPJ</name>
<keyword id="KW-0378">Hydrolase</keyword>
<keyword id="KW-0479">Metal-binding</keyword>
<keyword id="KW-0482">Metalloprotease</keyword>
<keyword id="KW-0645">Protease</keyword>
<keyword id="KW-0862">Zinc</keyword>
<comment type="similarity">
    <text evidence="2">Belongs to the UPF0758 family.</text>
</comment>
<protein>
    <recommendedName>
        <fullName>UPF0758 protein Rpic_2712</fullName>
    </recommendedName>
</protein>
<evidence type="ECO:0000255" key="1">
    <source>
        <dbReference type="PROSITE-ProRule" id="PRU01182"/>
    </source>
</evidence>
<evidence type="ECO:0000305" key="2"/>
<feature type="chain" id="PRO_1000089835" description="UPF0758 protein Rpic_2712">
    <location>
        <begin position="1"/>
        <end position="224"/>
    </location>
</feature>
<feature type="domain" description="MPN" evidence="1">
    <location>
        <begin position="102"/>
        <end position="224"/>
    </location>
</feature>
<feature type="short sequence motif" description="JAMM motif" evidence="1">
    <location>
        <begin position="173"/>
        <end position="186"/>
    </location>
</feature>
<feature type="binding site" evidence="1">
    <location>
        <position position="173"/>
    </location>
    <ligand>
        <name>Zn(2+)</name>
        <dbReference type="ChEBI" id="CHEBI:29105"/>
        <note>catalytic</note>
    </ligand>
</feature>
<feature type="binding site" evidence="1">
    <location>
        <position position="175"/>
    </location>
    <ligand>
        <name>Zn(2+)</name>
        <dbReference type="ChEBI" id="CHEBI:29105"/>
        <note>catalytic</note>
    </ligand>
</feature>
<feature type="binding site" evidence="1">
    <location>
        <position position="186"/>
    </location>
    <ligand>
        <name>Zn(2+)</name>
        <dbReference type="ChEBI" id="CHEBI:29105"/>
        <note>catalytic</note>
    </ligand>
</feature>
<sequence length="224" mass="25057">MAIVDWPAHERPREKLLAHGPAALSDAELLAIFLRVGVPGKSAVDLARELLAHFGSLARLCHASQQEFSSINGMGPAKYAQLHALLEVARRALKEDFTQGQTFESAQSVKDFLRLTLGHRPHEVFACFFLDVRHRLIAWEELFRGTLTEARVYPREIAKRALHHNAAAVILAHNHPTGNTEPSESDVILTRELCRALAMLDVIVLDHMIVGRNHVYGFLEHGKM</sequence>
<proteinExistence type="inferred from homology"/>